<proteinExistence type="predicted"/>
<keyword id="KW-1185">Reference proteome</keyword>
<organism>
    <name type="scientific">Acanthamoeba polyphaga mimivirus</name>
    <name type="common">APMV</name>
    <dbReference type="NCBI Taxonomy" id="212035"/>
    <lineage>
        <taxon>Viruses</taxon>
        <taxon>Varidnaviria</taxon>
        <taxon>Bamfordvirae</taxon>
        <taxon>Nucleocytoviricota</taxon>
        <taxon>Megaviricetes</taxon>
        <taxon>Imitervirales</taxon>
        <taxon>Mimiviridae</taxon>
        <taxon>Megamimivirinae</taxon>
        <taxon>Mimivirus</taxon>
        <taxon>Mimivirus bradfordmassiliense</taxon>
    </lineage>
</organism>
<sequence>MSRPAIIDNEKISKWRSYVESHVITYDNYMKIFRGESKVVGDRLEHCLFMDYGFKFVYSIEEAPSPDFKKLHTIKRLSGSVDNGNFPSLELIKIMLDKLGMKTLDKCQYRINKNDIVPNIEIIDLQHSRDLEIVNQEVKN</sequence>
<reference key="1">
    <citation type="journal article" date="2004" name="Science">
        <title>The 1.2-megabase genome sequence of Mimivirus.</title>
        <authorList>
            <person name="Raoult D."/>
            <person name="Audic S."/>
            <person name="Robert C."/>
            <person name="Abergel C."/>
            <person name="Renesto P."/>
            <person name="Ogata H."/>
            <person name="La Scola B."/>
            <person name="Susan M."/>
            <person name="Claverie J.-M."/>
        </authorList>
    </citation>
    <scope>NUCLEOTIDE SEQUENCE [LARGE SCALE GENOMIC DNA]</scope>
    <source>
        <strain>Rowbotham-Bradford</strain>
    </source>
</reference>
<dbReference type="EMBL" id="AY653733">
    <property type="protein sequence ID" value="AAV50443.1"/>
    <property type="molecule type" value="Genomic_DNA"/>
</dbReference>
<dbReference type="KEGG" id="vg:9924769"/>
<dbReference type="OrthoDB" id="22766at10239"/>
<dbReference type="Proteomes" id="UP000001134">
    <property type="component" value="Genome"/>
</dbReference>
<name>YL169_MIMIV</name>
<organismHost>
    <name type="scientific">Acanthamoeba polyphaga</name>
    <name type="common">Amoeba</name>
    <dbReference type="NCBI Taxonomy" id="5757"/>
</organismHost>
<gene>
    <name type="ordered locus">MIMI_L169</name>
</gene>
<accession>Q5UPN1</accession>
<protein>
    <recommendedName>
        <fullName>Uncharacterized protein L169</fullName>
    </recommendedName>
</protein>
<feature type="chain" id="PRO_0000243997" description="Uncharacterized protein L169">
    <location>
        <begin position="1"/>
        <end position="140"/>
    </location>
</feature>